<feature type="chain" id="PRO_0000064079" description="Glycerol uptake facilitator protein">
    <location>
        <begin position="1"/>
        <end position="262"/>
    </location>
</feature>
<feature type="topological domain" description="Cytoplasmic" evidence="1">
    <location>
        <begin position="1"/>
        <end position="7"/>
    </location>
</feature>
<feature type="transmembrane region" description="Helical; Name=M1" evidence="1">
    <location>
        <begin position="8"/>
        <end position="36"/>
    </location>
</feature>
<feature type="topological domain" description="Extracellular" evidence="1">
    <location>
        <begin position="37"/>
        <end position="41"/>
    </location>
</feature>
<feature type="transmembrane region" description="Helical; Name=M2" evidence="1">
    <location>
        <begin position="42"/>
        <end position="62"/>
    </location>
</feature>
<feature type="topological domain" description="Cytoplasmic" evidence="1">
    <location>
        <begin position="63"/>
        <end position="65"/>
    </location>
</feature>
<feature type="intramembrane region" evidence="1">
    <location>
        <begin position="66"/>
        <end position="69"/>
    </location>
</feature>
<feature type="intramembrane region" description="Helical; Name=M3" evidence="1">
    <location>
        <begin position="70"/>
        <end position="80"/>
    </location>
</feature>
<feature type="topological domain" description="Cytoplasmic" evidence="1">
    <location>
        <begin position="81"/>
        <end position="86"/>
    </location>
</feature>
<feature type="transmembrane region" description="Helical; Name=M4" evidence="1">
    <location>
        <begin position="87"/>
        <end position="110"/>
    </location>
</feature>
<feature type="topological domain" description="Extracellular" evidence="1">
    <location>
        <begin position="111"/>
        <end position="145"/>
    </location>
</feature>
<feature type="transmembrane region" description="Helical; Name=M5" evidence="1">
    <location>
        <begin position="146"/>
        <end position="171"/>
    </location>
</feature>
<feature type="topological domain" description="Cytoplasmic" evidence="1">
    <location>
        <begin position="172"/>
        <end position="180"/>
    </location>
</feature>
<feature type="transmembrane region" description="Helical; Name=M6" evidence="1">
    <location>
        <begin position="181"/>
        <end position="197"/>
    </location>
</feature>
<feature type="topological domain" description="Extracellular" evidence="1">
    <location>
        <begin position="198"/>
        <end position="201"/>
    </location>
</feature>
<feature type="intramembrane region" evidence="1">
    <location>
        <begin position="202"/>
        <end position="205"/>
    </location>
</feature>
<feature type="intramembrane region" description="Helical; Name=M7" evidence="1">
    <location>
        <begin position="206"/>
        <end position="219"/>
    </location>
</feature>
<feature type="topological domain" description="Extracellular" evidence="1">
    <location>
        <begin position="220"/>
        <end position="234"/>
    </location>
</feature>
<feature type="transmembrane region" description="Helical; Name=M8" evidence="1">
    <location>
        <begin position="235"/>
        <end position="259"/>
    </location>
</feature>
<feature type="topological domain" description="Cytoplasmic" evidence="1">
    <location>
        <begin position="260"/>
        <end position="262"/>
    </location>
</feature>
<feature type="short sequence motif" description="NPA 1" evidence="2">
    <location>
        <begin position="70"/>
        <end position="72"/>
    </location>
</feature>
<feature type="short sequence motif" description="NPA 2" evidence="2">
    <location>
        <begin position="206"/>
        <end position="208"/>
    </location>
</feature>
<proteinExistence type="inferred from homology"/>
<organism>
    <name type="scientific">Buchnera aphidicola subsp. Schizaphis graminum (strain Sg)</name>
    <dbReference type="NCBI Taxonomy" id="198804"/>
    <lineage>
        <taxon>Bacteria</taxon>
        <taxon>Pseudomonadati</taxon>
        <taxon>Pseudomonadota</taxon>
        <taxon>Gammaproteobacteria</taxon>
        <taxon>Enterobacterales</taxon>
        <taxon>Erwiniaceae</taxon>
        <taxon>Buchnera</taxon>
    </lineage>
</organism>
<accession>Q8K9M9</accession>
<gene>
    <name type="primary">glpF</name>
    <name type="ordered locus">BUsg_296</name>
</gene>
<protein>
    <recommendedName>
        <fullName evidence="1">Glycerol uptake facilitator protein</fullName>
    </recommendedName>
</protein>
<reference key="1">
    <citation type="journal article" date="2002" name="Science">
        <title>50 million years of genomic stasis in endosymbiotic bacteria.</title>
        <authorList>
            <person name="Tamas I."/>
            <person name="Klasson L."/>
            <person name="Canbaeck B."/>
            <person name="Naeslund A.K."/>
            <person name="Eriksson A.-S."/>
            <person name="Wernegreen J.J."/>
            <person name="Sandstroem J.P."/>
            <person name="Moran N.A."/>
            <person name="Andersson S.G.E."/>
        </authorList>
    </citation>
    <scope>NUCLEOTIDE SEQUENCE [LARGE SCALE GENOMIC DNA]</scope>
    <source>
        <strain>Sg</strain>
    </source>
</reference>
<name>GLPF_BUCAP</name>
<comment type="function">
    <text evidence="1">Mediates glycerol diffusion across the cytoplasmic membrane via a pore-type mechanism.</text>
</comment>
<comment type="catalytic activity">
    <reaction evidence="1">
        <text>glycerol(in) = glycerol(out)</text>
        <dbReference type="Rhea" id="RHEA:29675"/>
        <dbReference type="ChEBI" id="CHEBI:17754"/>
    </reaction>
</comment>
<comment type="subcellular location">
    <subcellularLocation>
        <location evidence="1">Cell membrane</location>
        <topology evidence="1">Multi-pass membrane protein</topology>
    </subcellularLocation>
</comment>
<comment type="domain">
    <text evidence="2">Aquaporins contain two tandem repeats each containing three membrane-spanning domains and a pore-forming loop with the signature motif Asn-Pro-Ala (NPA).</text>
</comment>
<comment type="similarity">
    <text evidence="2">Belongs to the MIP/aquaporin (TC 1.A.8) family.</text>
</comment>
<evidence type="ECO:0000250" key="1">
    <source>
        <dbReference type="UniProtKB" id="P0AER0"/>
    </source>
</evidence>
<evidence type="ECO:0000305" key="2"/>
<sequence>MNFCSKKKILKQCFFEFLGTGLIIFLGISSLVVSKLTNFHFNHCEISCIWGLGVFISICFCSSVSGAHLNPAITIFLFLSSQFNKKKVIPYILSQISGTFFFTFLIYLIFNNLLNSFESKYNIVRGTKKSLELASLFCVFPKENYNFIHDFILEILIGIIFIIILMKLSEKNNLFKFYKFINPFLIGTLVIIINLFLTSYSNITLNPARDLGPRIFLSLIGWGKLAFTGDDNIIFPYFLIPTIAPIIGINLGGWIYILYIKK</sequence>
<dbReference type="EMBL" id="AE013218">
    <property type="protein sequence ID" value="AAM67851.1"/>
    <property type="molecule type" value="Genomic_DNA"/>
</dbReference>
<dbReference type="RefSeq" id="WP_011053818.1">
    <property type="nucleotide sequence ID" value="NC_004061.1"/>
</dbReference>
<dbReference type="SMR" id="Q8K9M9"/>
<dbReference type="STRING" id="198804.BUsg_296"/>
<dbReference type="GeneID" id="93003766"/>
<dbReference type="KEGG" id="bas:BUsg_296"/>
<dbReference type="eggNOG" id="COG0580">
    <property type="taxonomic scope" value="Bacteria"/>
</dbReference>
<dbReference type="HOGENOM" id="CLU_020019_9_3_6"/>
<dbReference type="Proteomes" id="UP000000416">
    <property type="component" value="Chromosome"/>
</dbReference>
<dbReference type="GO" id="GO:0005886">
    <property type="term" value="C:plasma membrane"/>
    <property type="evidence" value="ECO:0007669"/>
    <property type="project" value="UniProtKB-SubCell"/>
</dbReference>
<dbReference type="GO" id="GO:0015254">
    <property type="term" value="F:glycerol channel activity"/>
    <property type="evidence" value="ECO:0007669"/>
    <property type="project" value="TreeGrafter"/>
</dbReference>
<dbReference type="Gene3D" id="1.20.1080.10">
    <property type="entry name" value="Glycerol uptake facilitator protein"/>
    <property type="match status" value="1"/>
</dbReference>
<dbReference type="InterPro" id="IPR023271">
    <property type="entry name" value="Aquaporin-like"/>
</dbReference>
<dbReference type="InterPro" id="IPR000425">
    <property type="entry name" value="MIP"/>
</dbReference>
<dbReference type="InterPro" id="IPR050363">
    <property type="entry name" value="MIP/Aquaporin"/>
</dbReference>
<dbReference type="InterPro" id="IPR022357">
    <property type="entry name" value="MIP_CS"/>
</dbReference>
<dbReference type="PANTHER" id="PTHR43829">
    <property type="entry name" value="AQUAPORIN OR AQUAGLYCEROPORIN RELATED"/>
    <property type="match status" value="1"/>
</dbReference>
<dbReference type="PANTHER" id="PTHR43829:SF9">
    <property type="entry name" value="AQUAPORIN-9"/>
    <property type="match status" value="1"/>
</dbReference>
<dbReference type="Pfam" id="PF00230">
    <property type="entry name" value="MIP"/>
    <property type="match status" value="1"/>
</dbReference>
<dbReference type="PRINTS" id="PR00783">
    <property type="entry name" value="MINTRINSICP"/>
</dbReference>
<dbReference type="SUPFAM" id="SSF81338">
    <property type="entry name" value="Aquaporin-like"/>
    <property type="match status" value="1"/>
</dbReference>
<dbReference type="PROSITE" id="PS00221">
    <property type="entry name" value="MIP"/>
    <property type="match status" value="1"/>
</dbReference>
<keyword id="KW-1003">Cell membrane</keyword>
<keyword id="KW-0472">Membrane</keyword>
<keyword id="KW-0812">Transmembrane</keyword>
<keyword id="KW-1133">Transmembrane helix</keyword>
<keyword id="KW-0813">Transport</keyword>